<accession>Q2RTH6</accession>
<keyword id="KW-0963">Cytoplasm</keyword>
<keyword id="KW-0378">Hydrolase</keyword>
<keyword id="KW-0479">Metal-binding</keyword>
<keyword id="KW-0547">Nucleotide-binding</keyword>
<keyword id="KW-1185">Reference proteome</keyword>
<gene>
    <name evidence="1" type="primary">surE</name>
    <name type="ordered locus">Rru_A1769</name>
</gene>
<protein>
    <recommendedName>
        <fullName evidence="1">5'-nucleotidase SurE</fullName>
        <ecNumber evidence="1">3.1.3.5</ecNumber>
    </recommendedName>
    <alternativeName>
        <fullName evidence="1">Nucleoside 5'-monophosphate phosphohydrolase</fullName>
    </alternativeName>
</protein>
<comment type="function">
    <text evidence="1">Nucleotidase that shows phosphatase activity on nucleoside 5'-monophosphates.</text>
</comment>
<comment type="catalytic activity">
    <reaction evidence="1">
        <text>a ribonucleoside 5'-phosphate + H2O = a ribonucleoside + phosphate</text>
        <dbReference type="Rhea" id="RHEA:12484"/>
        <dbReference type="ChEBI" id="CHEBI:15377"/>
        <dbReference type="ChEBI" id="CHEBI:18254"/>
        <dbReference type="ChEBI" id="CHEBI:43474"/>
        <dbReference type="ChEBI" id="CHEBI:58043"/>
        <dbReference type="EC" id="3.1.3.5"/>
    </reaction>
</comment>
<comment type="cofactor">
    <cofactor evidence="1">
        <name>a divalent metal cation</name>
        <dbReference type="ChEBI" id="CHEBI:60240"/>
    </cofactor>
    <text evidence="1">Binds 1 divalent metal cation per subunit.</text>
</comment>
<comment type="subcellular location">
    <subcellularLocation>
        <location evidence="1">Cytoplasm</location>
    </subcellularLocation>
</comment>
<comment type="similarity">
    <text evidence="1">Belongs to the SurE nucleotidase family.</text>
</comment>
<name>SURE_RHORT</name>
<reference key="1">
    <citation type="journal article" date="2011" name="Stand. Genomic Sci.">
        <title>Complete genome sequence of Rhodospirillum rubrum type strain (S1).</title>
        <authorList>
            <person name="Munk A.C."/>
            <person name="Copeland A."/>
            <person name="Lucas S."/>
            <person name="Lapidus A."/>
            <person name="Del Rio T.G."/>
            <person name="Barry K."/>
            <person name="Detter J.C."/>
            <person name="Hammon N."/>
            <person name="Israni S."/>
            <person name="Pitluck S."/>
            <person name="Brettin T."/>
            <person name="Bruce D."/>
            <person name="Han C."/>
            <person name="Tapia R."/>
            <person name="Gilna P."/>
            <person name="Schmutz J."/>
            <person name="Larimer F."/>
            <person name="Land M."/>
            <person name="Kyrpides N.C."/>
            <person name="Mavromatis K."/>
            <person name="Richardson P."/>
            <person name="Rohde M."/>
            <person name="Goeker M."/>
            <person name="Klenk H.P."/>
            <person name="Zhang Y."/>
            <person name="Roberts G.P."/>
            <person name="Reslewic S."/>
            <person name="Schwartz D.C."/>
        </authorList>
    </citation>
    <scope>NUCLEOTIDE SEQUENCE [LARGE SCALE GENOMIC DNA]</scope>
    <source>
        <strain>ATCC 11170 / ATH 1.1.1 / DSM 467 / LMG 4362 / NCIMB 8255 / S1</strain>
    </source>
</reference>
<dbReference type="EC" id="3.1.3.5" evidence="1"/>
<dbReference type="EMBL" id="CP000230">
    <property type="protein sequence ID" value="ABC22569.1"/>
    <property type="molecule type" value="Genomic_DNA"/>
</dbReference>
<dbReference type="RefSeq" id="WP_011389522.1">
    <property type="nucleotide sequence ID" value="NC_007643.1"/>
</dbReference>
<dbReference type="RefSeq" id="YP_426856.1">
    <property type="nucleotide sequence ID" value="NC_007643.1"/>
</dbReference>
<dbReference type="SMR" id="Q2RTH6"/>
<dbReference type="STRING" id="269796.Rru_A1769"/>
<dbReference type="EnsemblBacteria" id="ABC22569">
    <property type="protein sequence ID" value="ABC22569"/>
    <property type="gene ID" value="Rru_A1769"/>
</dbReference>
<dbReference type="KEGG" id="rru:Rru_A1769"/>
<dbReference type="PATRIC" id="fig|269796.9.peg.1847"/>
<dbReference type="eggNOG" id="COG0496">
    <property type="taxonomic scope" value="Bacteria"/>
</dbReference>
<dbReference type="HOGENOM" id="CLU_045192_1_2_5"/>
<dbReference type="PhylomeDB" id="Q2RTH6"/>
<dbReference type="Proteomes" id="UP000001929">
    <property type="component" value="Chromosome"/>
</dbReference>
<dbReference type="GO" id="GO:0005737">
    <property type="term" value="C:cytoplasm"/>
    <property type="evidence" value="ECO:0007669"/>
    <property type="project" value="UniProtKB-SubCell"/>
</dbReference>
<dbReference type="GO" id="GO:0008254">
    <property type="term" value="F:3'-nucleotidase activity"/>
    <property type="evidence" value="ECO:0007669"/>
    <property type="project" value="TreeGrafter"/>
</dbReference>
<dbReference type="GO" id="GO:0008253">
    <property type="term" value="F:5'-nucleotidase activity"/>
    <property type="evidence" value="ECO:0007669"/>
    <property type="project" value="UniProtKB-UniRule"/>
</dbReference>
<dbReference type="GO" id="GO:0004309">
    <property type="term" value="F:exopolyphosphatase activity"/>
    <property type="evidence" value="ECO:0007669"/>
    <property type="project" value="TreeGrafter"/>
</dbReference>
<dbReference type="GO" id="GO:0046872">
    <property type="term" value="F:metal ion binding"/>
    <property type="evidence" value="ECO:0007669"/>
    <property type="project" value="UniProtKB-UniRule"/>
</dbReference>
<dbReference type="GO" id="GO:0000166">
    <property type="term" value="F:nucleotide binding"/>
    <property type="evidence" value="ECO:0007669"/>
    <property type="project" value="UniProtKB-KW"/>
</dbReference>
<dbReference type="FunFam" id="3.40.1210.10:FF:000001">
    <property type="entry name" value="5'/3'-nucleotidase SurE"/>
    <property type="match status" value="1"/>
</dbReference>
<dbReference type="Gene3D" id="3.40.1210.10">
    <property type="entry name" value="Survival protein SurE-like phosphatase/nucleotidase"/>
    <property type="match status" value="1"/>
</dbReference>
<dbReference type="HAMAP" id="MF_00060">
    <property type="entry name" value="SurE"/>
    <property type="match status" value="1"/>
</dbReference>
<dbReference type="InterPro" id="IPR030048">
    <property type="entry name" value="SurE"/>
</dbReference>
<dbReference type="InterPro" id="IPR002828">
    <property type="entry name" value="SurE-like_Pase/nucleotidase"/>
</dbReference>
<dbReference type="InterPro" id="IPR036523">
    <property type="entry name" value="SurE-like_sf"/>
</dbReference>
<dbReference type="NCBIfam" id="NF001490">
    <property type="entry name" value="PRK00346.1-4"/>
    <property type="match status" value="1"/>
</dbReference>
<dbReference type="NCBIfam" id="TIGR00087">
    <property type="entry name" value="surE"/>
    <property type="match status" value="1"/>
</dbReference>
<dbReference type="PANTHER" id="PTHR30457">
    <property type="entry name" value="5'-NUCLEOTIDASE SURE"/>
    <property type="match status" value="1"/>
</dbReference>
<dbReference type="PANTHER" id="PTHR30457:SF12">
    <property type="entry name" value="5'_3'-NUCLEOTIDASE SURE"/>
    <property type="match status" value="1"/>
</dbReference>
<dbReference type="Pfam" id="PF01975">
    <property type="entry name" value="SurE"/>
    <property type="match status" value="1"/>
</dbReference>
<dbReference type="SUPFAM" id="SSF64167">
    <property type="entry name" value="SurE-like"/>
    <property type="match status" value="1"/>
</dbReference>
<evidence type="ECO:0000255" key="1">
    <source>
        <dbReference type="HAMAP-Rule" id="MF_00060"/>
    </source>
</evidence>
<sequence length="261" mass="28527">MFSPLTDLSRARILLSNDDGFEAEGLAVLERVARTLSDDVWIVAPETEQSGAGHALTIHDPLRFRARGEKRFSVRGTPTDCVLVAVNHLMDRPPDLVVSGINRGGNLGEDVHYSGTVAAAMEGTLLGLRAIALSQVFETNGTGIADPFQVAATHASDVIRRVCGRPWNRQVLINVNFPDCPLDAVTGIELKRQGRRKMGDDIEERRDPRDRPYLWIGAQRKEDRKTAGTDMEAISRGAITVTPLCVDMTDLPTIEALTGAF</sequence>
<proteinExistence type="inferred from homology"/>
<feature type="chain" id="PRO_0000235645" description="5'-nucleotidase SurE">
    <location>
        <begin position="1"/>
        <end position="261"/>
    </location>
</feature>
<feature type="binding site" evidence="1">
    <location>
        <position position="18"/>
    </location>
    <ligand>
        <name>a divalent metal cation</name>
        <dbReference type="ChEBI" id="CHEBI:60240"/>
    </ligand>
</feature>
<feature type="binding site" evidence="1">
    <location>
        <position position="19"/>
    </location>
    <ligand>
        <name>a divalent metal cation</name>
        <dbReference type="ChEBI" id="CHEBI:60240"/>
    </ligand>
</feature>
<feature type="binding site" evidence="1">
    <location>
        <position position="50"/>
    </location>
    <ligand>
        <name>a divalent metal cation</name>
        <dbReference type="ChEBI" id="CHEBI:60240"/>
    </ligand>
</feature>
<feature type="binding site" evidence="1">
    <location>
        <position position="102"/>
    </location>
    <ligand>
        <name>a divalent metal cation</name>
        <dbReference type="ChEBI" id="CHEBI:60240"/>
    </ligand>
</feature>
<organism>
    <name type="scientific">Rhodospirillum rubrum (strain ATCC 11170 / ATH 1.1.1 / DSM 467 / LMG 4362 / NCIMB 8255 / S1)</name>
    <dbReference type="NCBI Taxonomy" id="269796"/>
    <lineage>
        <taxon>Bacteria</taxon>
        <taxon>Pseudomonadati</taxon>
        <taxon>Pseudomonadota</taxon>
        <taxon>Alphaproteobacteria</taxon>
        <taxon>Rhodospirillales</taxon>
        <taxon>Rhodospirillaceae</taxon>
        <taxon>Rhodospirillum</taxon>
    </lineage>
</organism>